<proteinExistence type="inferred from homology"/>
<comment type="function">
    <text evidence="1">May play a role in photosystem I and II biogenesis.</text>
</comment>
<comment type="subcellular location">
    <subcellularLocation>
        <location evidence="1">Plastid</location>
        <location evidence="1">Chloroplast thylakoid membrane</location>
        <topology evidence="1">Single-pass membrane protein</topology>
    </subcellularLocation>
</comment>
<comment type="similarity">
    <text evidence="1">Belongs to the PsbN family.</text>
</comment>
<comment type="caution">
    <text evidence="1">Originally thought to be a component of PSII; based on experiments in Synechocystis, N.tabacum and barley, and its absence from PSII in T.elongatus and T.vulcanus, this is probably not true.</text>
</comment>
<geneLocation type="chloroplast"/>
<organism>
    <name type="scientific">Ostreococcus tauri</name>
    <dbReference type="NCBI Taxonomy" id="70448"/>
    <lineage>
        <taxon>Eukaryota</taxon>
        <taxon>Viridiplantae</taxon>
        <taxon>Chlorophyta</taxon>
        <taxon>Mamiellophyceae</taxon>
        <taxon>Mamiellales</taxon>
        <taxon>Bathycoccaceae</taxon>
        <taxon>Ostreococcus</taxon>
    </lineage>
</organism>
<feature type="chain" id="PRO_0000276275" description="Protein PsbN">
    <location>
        <begin position="1"/>
        <end position="44"/>
    </location>
</feature>
<feature type="transmembrane region" description="Helical" evidence="1">
    <location>
        <begin position="6"/>
        <end position="26"/>
    </location>
</feature>
<evidence type="ECO:0000255" key="1">
    <source>
        <dbReference type="HAMAP-Rule" id="MF_00293"/>
    </source>
</evidence>
<accession>Q0P3N3</accession>
<gene>
    <name evidence="1" type="primary">psbN</name>
    <name type="ordered locus">OtCpg00190</name>
</gene>
<keyword id="KW-0150">Chloroplast</keyword>
<keyword id="KW-0472">Membrane</keyword>
<keyword id="KW-0934">Plastid</keyword>
<keyword id="KW-1185">Reference proteome</keyword>
<keyword id="KW-0793">Thylakoid</keyword>
<keyword id="KW-0812">Transmembrane</keyword>
<keyword id="KW-1133">Transmembrane helix</keyword>
<protein>
    <recommendedName>
        <fullName evidence="1">Protein PsbN</fullName>
    </recommendedName>
</protein>
<dbReference type="EMBL" id="CR954199">
    <property type="protein sequence ID" value="CAL36344.1"/>
    <property type="molecule type" value="Genomic_DNA"/>
</dbReference>
<dbReference type="RefSeq" id="YP_717222.1">
    <property type="nucleotide sequence ID" value="NC_008289.1"/>
</dbReference>
<dbReference type="SMR" id="Q0P3N3"/>
<dbReference type="FunCoup" id="Q0P3N3">
    <property type="interactions" value="32"/>
</dbReference>
<dbReference type="STRING" id="70448.Q0P3N3"/>
<dbReference type="GeneID" id="4238783"/>
<dbReference type="KEGG" id="ota:OstapCp19"/>
<dbReference type="eggNOG" id="ENOG502R33S">
    <property type="taxonomic scope" value="Eukaryota"/>
</dbReference>
<dbReference type="InParanoid" id="Q0P3N3"/>
<dbReference type="Proteomes" id="UP000009170">
    <property type="component" value="Chloroplast"/>
</dbReference>
<dbReference type="GO" id="GO:0009535">
    <property type="term" value="C:chloroplast thylakoid membrane"/>
    <property type="evidence" value="ECO:0007669"/>
    <property type="project" value="UniProtKB-SubCell"/>
</dbReference>
<dbReference type="GO" id="GO:0015979">
    <property type="term" value="P:photosynthesis"/>
    <property type="evidence" value="ECO:0007669"/>
    <property type="project" value="InterPro"/>
</dbReference>
<dbReference type="HAMAP" id="MF_00293">
    <property type="entry name" value="PSII_PsbN"/>
    <property type="match status" value="1"/>
</dbReference>
<dbReference type="InterPro" id="IPR003398">
    <property type="entry name" value="PSII_PsbN"/>
</dbReference>
<dbReference type="PANTHER" id="PTHR35326">
    <property type="entry name" value="PROTEIN PSBN"/>
    <property type="match status" value="1"/>
</dbReference>
<dbReference type="PANTHER" id="PTHR35326:SF3">
    <property type="entry name" value="PROTEIN PSBN"/>
    <property type="match status" value="1"/>
</dbReference>
<dbReference type="Pfam" id="PF02468">
    <property type="entry name" value="PsbN"/>
    <property type="match status" value="1"/>
</dbReference>
<name>PSBN_OSTTA</name>
<reference key="1">
    <citation type="journal article" date="2007" name="Mol. Biol. Evol.">
        <title>The complete chloroplast and mitochondrial DNA sequence of Ostreococcus tauri: organelle genomes of the smallest eukaryote are examples of compaction.</title>
        <authorList>
            <person name="Robbens S."/>
            <person name="Derelle E."/>
            <person name="Ferraz C."/>
            <person name="Wuyts J."/>
            <person name="Moreau H."/>
            <person name="Van de Peer Y."/>
        </authorList>
    </citation>
    <scope>NUCLEOTIDE SEQUENCE [LARGE SCALE GENOMIC DNA]</scope>
    <source>
        <strain>OTTH0595</strain>
    </source>
</reference>
<sequence length="44" mass="5106">MENSAFFYGVFLWCLLISVTGYSIYIGFGPPSKELRDPFEEHED</sequence>